<comment type="function">
    <text evidence="1">Core subunit of the mitochondrial membrane respiratory chain NADH dehydrogenase (Complex I) that is believed to belong to the minimal assembly required for catalysis. Complex I functions in the transfer of electrons from NADH to the respiratory chain. The immediate electron acceptor for the enzyme is believed to be ubiquinone (By similarity).</text>
</comment>
<comment type="catalytic activity">
    <reaction>
        <text>a ubiquinone + NADH + 5 H(+)(in) = a ubiquinol + NAD(+) + 4 H(+)(out)</text>
        <dbReference type="Rhea" id="RHEA:29091"/>
        <dbReference type="Rhea" id="RHEA-COMP:9565"/>
        <dbReference type="Rhea" id="RHEA-COMP:9566"/>
        <dbReference type="ChEBI" id="CHEBI:15378"/>
        <dbReference type="ChEBI" id="CHEBI:16389"/>
        <dbReference type="ChEBI" id="CHEBI:17976"/>
        <dbReference type="ChEBI" id="CHEBI:57540"/>
        <dbReference type="ChEBI" id="CHEBI:57945"/>
        <dbReference type="EC" id="7.1.1.2"/>
    </reaction>
</comment>
<comment type="subcellular location">
    <subcellularLocation>
        <location evidence="1">Mitochondrion membrane</location>
        <topology evidence="1">Multi-pass membrane protein</topology>
    </subcellularLocation>
</comment>
<comment type="similarity">
    <text evidence="3">Belongs to the complex I subunit 4 family.</text>
</comment>
<geneLocation type="mitochondrion"/>
<accession>P41308</accession>
<sequence length="474" mass="53761">MLKILLPTLMLIPLTWLSKNKWLWINTTTYSLLISITSLPMLYHPMDLGYNFNNSFSLDSLSSPLLVLSCWLLPLMIMASQNHLNKESLMRKKLYLTMMVILQSSLIIAFTSSELMMFYILFETTLIPTLIIITRWGNQNERLNAGIYFLFYTLVGSLPLLVALLTMNKNLGTLHILMNSILINQLNYTLSNSTLWYACMTAFMIKMPLYGLHLWLPKAHVEAPIAGSMVLAAILLKLGGYGIMRISLFTEPMTMHLLYPFIILSMWGMIMTSSICMRQTDLKSLIAYSSVSHMALVIIAALIQSTTSFMGATILMVAHGLTSSMLFCLANTNYERIHSRTMILARGLQLILPLMTTWWLTASLANLALPPTINLLGELMIITASFSWSNFSILLLGLNTVITALYSLYMLTTSQRGKFTHHMTSLYPSFTREHMLMTLHIMPLILLSLNPKYILGMTYCKYSLMKTLDCESKH</sequence>
<gene>
    <name type="primary">MT-ND4</name>
    <name type="synonym">MTND4</name>
    <name type="synonym">NADH4</name>
    <name type="synonym">ND4</name>
</gene>
<proteinExistence type="inferred from homology"/>
<name>NU4M_DIDVI</name>
<dbReference type="EC" id="7.1.1.2"/>
<dbReference type="EMBL" id="Z29573">
    <property type="protein sequence ID" value="CAA82686.1"/>
    <property type="molecule type" value="Genomic_DNA"/>
</dbReference>
<dbReference type="PIR" id="S47879">
    <property type="entry name" value="S47879"/>
</dbReference>
<dbReference type="RefSeq" id="NP_007104.2">
    <property type="nucleotide sequence ID" value="NC_001610.1"/>
</dbReference>
<dbReference type="SMR" id="P41308"/>
<dbReference type="GeneID" id="807778"/>
<dbReference type="CTD" id="4538"/>
<dbReference type="GO" id="GO:0031966">
    <property type="term" value="C:mitochondrial membrane"/>
    <property type="evidence" value="ECO:0007669"/>
    <property type="project" value="UniProtKB-SubCell"/>
</dbReference>
<dbReference type="GO" id="GO:0008137">
    <property type="term" value="F:NADH dehydrogenase (ubiquinone) activity"/>
    <property type="evidence" value="ECO:0007669"/>
    <property type="project" value="UniProtKB-EC"/>
</dbReference>
<dbReference type="GO" id="GO:0048039">
    <property type="term" value="F:ubiquinone binding"/>
    <property type="evidence" value="ECO:0007669"/>
    <property type="project" value="TreeGrafter"/>
</dbReference>
<dbReference type="GO" id="GO:0042773">
    <property type="term" value="P:ATP synthesis coupled electron transport"/>
    <property type="evidence" value="ECO:0007669"/>
    <property type="project" value="InterPro"/>
</dbReference>
<dbReference type="GO" id="GO:0015990">
    <property type="term" value="P:electron transport coupled proton transport"/>
    <property type="evidence" value="ECO:0007669"/>
    <property type="project" value="TreeGrafter"/>
</dbReference>
<dbReference type="InterPro" id="IPR000260">
    <property type="entry name" value="NADH4_N"/>
</dbReference>
<dbReference type="InterPro" id="IPR010227">
    <property type="entry name" value="NADH_Q_OxRdtase_chainM/4"/>
</dbReference>
<dbReference type="InterPro" id="IPR003918">
    <property type="entry name" value="NADH_UbQ_OxRdtase"/>
</dbReference>
<dbReference type="InterPro" id="IPR001750">
    <property type="entry name" value="ND/Mrp_TM"/>
</dbReference>
<dbReference type="NCBIfam" id="TIGR01972">
    <property type="entry name" value="NDH_I_M"/>
    <property type="match status" value="1"/>
</dbReference>
<dbReference type="PANTHER" id="PTHR43507">
    <property type="entry name" value="NADH-UBIQUINONE OXIDOREDUCTASE CHAIN 4"/>
    <property type="match status" value="1"/>
</dbReference>
<dbReference type="PANTHER" id="PTHR43507:SF20">
    <property type="entry name" value="NADH-UBIQUINONE OXIDOREDUCTASE CHAIN 4"/>
    <property type="match status" value="1"/>
</dbReference>
<dbReference type="Pfam" id="PF01059">
    <property type="entry name" value="Oxidored_q5_N"/>
    <property type="match status" value="1"/>
</dbReference>
<dbReference type="Pfam" id="PF00361">
    <property type="entry name" value="Proton_antipo_M"/>
    <property type="match status" value="1"/>
</dbReference>
<dbReference type="PRINTS" id="PR01437">
    <property type="entry name" value="NUOXDRDTASE4"/>
</dbReference>
<organism>
    <name type="scientific">Didelphis virginiana</name>
    <name type="common">North American opossum</name>
    <name type="synonym">Didelphis marsupialis virginiana</name>
    <dbReference type="NCBI Taxonomy" id="9267"/>
    <lineage>
        <taxon>Eukaryota</taxon>
        <taxon>Metazoa</taxon>
        <taxon>Chordata</taxon>
        <taxon>Craniata</taxon>
        <taxon>Vertebrata</taxon>
        <taxon>Euteleostomi</taxon>
        <taxon>Mammalia</taxon>
        <taxon>Metatheria</taxon>
        <taxon>Didelphimorphia</taxon>
        <taxon>Didelphidae</taxon>
        <taxon>Didelphis</taxon>
    </lineage>
</organism>
<feature type="chain" id="PRO_0000117928" description="NADH-ubiquinone oxidoreductase chain 4">
    <location>
        <begin position="1"/>
        <end position="474"/>
    </location>
</feature>
<feature type="transmembrane region" description="Helical" evidence="2">
    <location>
        <begin position="22"/>
        <end position="42"/>
    </location>
</feature>
<feature type="transmembrane region" description="Helical" evidence="2">
    <location>
        <begin position="60"/>
        <end position="80"/>
    </location>
</feature>
<feature type="transmembrane region" description="Helical" evidence="2">
    <location>
        <begin position="93"/>
        <end position="113"/>
    </location>
</feature>
<feature type="transmembrane region" description="Helical" evidence="2">
    <location>
        <begin position="114"/>
        <end position="134"/>
    </location>
</feature>
<feature type="transmembrane region" description="Helical" evidence="2">
    <location>
        <begin position="145"/>
        <end position="165"/>
    </location>
</feature>
<feature type="transmembrane region" description="Helical" evidence="2">
    <location>
        <begin position="195"/>
        <end position="215"/>
    </location>
</feature>
<feature type="transmembrane region" description="Helical" evidence="2">
    <location>
        <begin position="224"/>
        <end position="244"/>
    </location>
</feature>
<feature type="transmembrane region" description="Helical" evidence="2">
    <location>
        <begin position="257"/>
        <end position="277"/>
    </location>
</feature>
<feature type="transmembrane region" description="Helical" evidence="2">
    <location>
        <begin position="284"/>
        <end position="303"/>
    </location>
</feature>
<feature type="transmembrane region" description="Helical" evidence="2">
    <location>
        <begin position="308"/>
        <end position="330"/>
    </location>
</feature>
<feature type="transmembrane region" description="Helical" evidence="2">
    <location>
        <begin position="350"/>
        <end position="370"/>
    </location>
</feature>
<feature type="transmembrane region" description="Helical" evidence="2">
    <location>
        <begin position="391"/>
        <end position="411"/>
    </location>
</feature>
<feature type="transmembrane region" description="Helical" evidence="2">
    <location>
        <begin position="435"/>
        <end position="455"/>
    </location>
</feature>
<keyword id="KW-0249">Electron transport</keyword>
<keyword id="KW-0472">Membrane</keyword>
<keyword id="KW-0496">Mitochondrion</keyword>
<keyword id="KW-0520">NAD</keyword>
<keyword id="KW-0679">Respiratory chain</keyword>
<keyword id="KW-1278">Translocase</keyword>
<keyword id="KW-0812">Transmembrane</keyword>
<keyword id="KW-1133">Transmembrane helix</keyword>
<keyword id="KW-0813">Transport</keyword>
<keyword id="KW-0830">Ubiquinone</keyword>
<reference key="1">
    <citation type="journal article" date="1994" name="Genetics">
        <title>The marsupial mitochondrial genome and the evolution of placental mammals.</title>
        <authorList>
            <person name="Janke A."/>
            <person name="Feldmaier-Fuchs G."/>
            <person name="Thomas K."/>
            <person name="von Haeseler A."/>
            <person name="Paabo S."/>
        </authorList>
    </citation>
    <scope>NUCLEOTIDE SEQUENCE [GENOMIC DNA]</scope>
    <source>
        <tissue>Liver</tissue>
    </source>
</reference>
<evidence type="ECO:0000250" key="1"/>
<evidence type="ECO:0000255" key="2"/>
<evidence type="ECO:0000305" key="3"/>
<protein>
    <recommendedName>
        <fullName>NADH-ubiquinone oxidoreductase chain 4</fullName>
        <ecNumber>7.1.1.2</ecNumber>
    </recommendedName>
    <alternativeName>
        <fullName>NADH dehydrogenase subunit 4</fullName>
    </alternativeName>
</protein>